<evidence type="ECO:0000255" key="1">
    <source>
        <dbReference type="HAMAP-Rule" id="MF_00036"/>
    </source>
</evidence>
<keyword id="KW-0030">Aminoacyl-tRNA synthetase</keyword>
<keyword id="KW-0067">ATP-binding</keyword>
<keyword id="KW-0963">Cytoplasm</keyword>
<keyword id="KW-0436">Ligase</keyword>
<keyword id="KW-0479">Metal-binding</keyword>
<keyword id="KW-0547">Nucleotide-binding</keyword>
<keyword id="KW-0648">Protein biosynthesis</keyword>
<keyword id="KW-0694">RNA-binding</keyword>
<keyword id="KW-0820">tRNA-binding</keyword>
<keyword id="KW-0862">Zinc</keyword>
<sequence>MSKSTAEIRQAFLDFFHSKGHQVVSSSSLVPNNDPTLLFTNAGMNQFKDVFLGLDKRAYSRATTSQRCVRAGGKHNDLENVGYTARHHTFFEMLGNFSFGDYFKHDAISFAWELLTGEQWFNLPKEKLWVTVYETDDEAYEIWANDIGIPRERIIRIGDNKGSAFASDNFWQMGDTGPCGPCTEIFFDHGDHIWGGPPGSAEEDGDRYIEIWNIVFMQFNRQSDGTMLPLPKPSVDTGMGLERIAAVLQHVNSNYEIDLFRDLIKAVAEVTGATDLSSKSLRVIADHIRSCAFLISDGVIPSNENRGYVLRRIIRRAIRHGNMLGAKETFFYKLVAPLIAVMGPAADELKQQQAMVEQVLKTEEEQFARTLERGLALLDEELSKLTGDTLDGETAFRLYDTYGFPVDLTADVCRERNLKVDEAGFEQAMEAQRRRARESSGFGADYNNLIRVDSASQFSGYNHVHQQATVTALFRNGEAVDEIHEGEEAVVVLNQTPFYGESGGQVGDTGELKNATATFAVADTQKYGQAIGHLGQLTHGTLRVNHSIDAQVDVARRNRIRLNHSATHLLHAALRKTLGDHVAQKGSLVNDKYLRFDFSHFEAMKPEQIRLVEDMVNEQIRRNMPVQTEVMELDAAKEKGAMALFGEKYDDQVRVLTMGDFSTELCGGIHASRTGDIGLFRILSESGTAAGIRRIEAVTGEGAIALLHQQSDLLQDVAHLVKGDTNNLADKVRAVLDRSKMLERELQQLKDQQAAQESASLSSNAKLVNGVKLLVSQLDNVEPKMLRTMVDDLKNQLGSAIIVLATTADDKVSLIVGVTKDLTSKVKAGELIADIAQQVGGKGGGRPDMAQAGGTNVQALPSALASVEAWVASRL</sequence>
<organism>
    <name type="scientific">Yersinia enterocolitica serotype O:8 / biotype 1B (strain NCTC 13174 / 8081)</name>
    <dbReference type="NCBI Taxonomy" id="393305"/>
    <lineage>
        <taxon>Bacteria</taxon>
        <taxon>Pseudomonadati</taxon>
        <taxon>Pseudomonadota</taxon>
        <taxon>Gammaproteobacteria</taxon>
        <taxon>Enterobacterales</taxon>
        <taxon>Yersiniaceae</taxon>
        <taxon>Yersinia</taxon>
    </lineage>
</organism>
<feature type="chain" id="PRO_0000347869" description="Alanine--tRNA ligase">
    <location>
        <begin position="1"/>
        <end position="875"/>
    </location>
</feature>
<feature type="binding site" evidence="1">
    <location>
        <position position="564"/>
    </location>
    <ligand>
        <name>Zn(2+)</name>
        <dbReference type="ChEBI" id="CHEBI:29105"/>
    </ligand>
</feature>
<feature type="binding site" evidence="1">
    <location>
        <position position="568"/>
    </location>
    <ligand>
        <name>Zn(2+)</name>
        <dbReference type="ChEBI" id="CHEBI:29105"/>
    </ligand>
</feature>
<feature type="binding site" evidence="1">
    <location>
        <position position="666"/>
    </location>
    <ligand>
        <name>Zn(2+)</name>
        <dbReference type="ChEBI" id="CHEBI:29105"/>
    </ligand>
</feature>
<feature type="binding site" evidence="1">
    <location>
        <position position="670"/>
    </location>
    <ligand>
        <name>Zn(2+)</name>
        <dbReference type="ChEBI" id="CHEBI:29105"/>
    </ligand>
</feature>
<comment type="function">
    <text evidence="1">Catalyzes the attachment of alanine to tRNA(Ala) in a two-step reaction: alanine is first activated by ATP to form Ala-AMP and then transferred to the acceptor end of tRNA(Ala). Also edits incorrectly charged Ser-tRNA(Ala) and Gly-tRNA(Ala) via its editing domain.</text>
</comment>
<comment type="catalytic activity">
    <reaction evidence="1">
        <text>tRNA(Ala) + L-alanine + ATP = L-alanyl-tRNA(Ala) + AMP + diphosphate</text>
        <dbReference type="Rhea" id="RHEA:12540"/>
        <dbReference type="Rhea" id="RHEA-COMP:9657"/>
        <dbReference type="Rhea" id="RHEA-COMP:9923"/>
        <dbReference type="ChEBI" id="CHEBI:30616"/>
        <dbReference type="ChEBI" id="CHEBI:33019"/>
        <dbReference type="ChEBI" id="CHEBI:57972"/>
        <dbReference type="ChEBI" id="CHEBI:78442"/>
        <dbReference type="ChEBI" id="CHEBI:78497"/>
        <dbReference type="ChEBI" id="CHEBI:456215"/>
        <dbReference type="EC" id="6.1.1.7"/>
    </reaction>
</comment>
<comment type="cofactor">
    <cofactor evidence="1">
        <name>Zn(2+)</name>
        <dbReference type="ChEBI" id="CHEBI:29105"/>
    </cofactor>
    <text evidence="1">Binds 1 zinc ion per subunit.</text>
</comment>
<comment type="subunit">
    <text evidence="1">Homotetramer.</text>
</comment>
<comment type="subcellular location">
    <subcellularLocation>
        <location evidence="1">Cytoplasm</location>
    </subcellularLocation>
</comment>
<comment type="domain">
    <text evidence="1">Consists of three domains; the N-terminal catalytic domain, the editing domain and the C-terminal C-Ala domain. The editing domain removes incorrectly charged amino acids, while the C-Ala domain, along with tRNA(Ala), serves as a bridge to cooperatively bring together the editing and aminoacylation centers thus stimulating deacylation of misacylated tRNAs.</text>
</comment>
<comment type="similarity">
    <text evidence="1">Belongs to the class-II aminoacyl-tRNA synthetase family.</text>
</comment>
<accession>A1JK09</accession>
<gene>
    <name evidence="1" type="primary">alaS</name>
    <name type="ordered locus">YE0834</name>
</gene>
<proteinExistence type="inferred from homology"/>
<reference key="1">
    <citation type="journal article" date="2006" name="PLoS Genet.">
        <title>The complete genome sequence and comparative genome analysis of the high pathogenicity Yersinia enterocolitica strain 8081.</title>
        <authorList>
            <person name="Thomson N.R."/>
            <person name="Howard S."/>
            <person name="Wren B.W."/>
            <person name="Holden M.T.G."/>
            <person name="Crossman L."/>
            <person name="Challis G.L."/>
            <person name="Churcher C."/>
            <person name="Mungall K."/>
            <person name="Brooks K."/>
            <person name="Chillingworth T."/>
            <person name="Feltwell T."/>
            <person name="Abdellah Z."/>
            <person name="Hauser H."/>
            <person name="Jagels K."/>
            <person name="Maddison M."/>
            <person name="Moule S."/>
            <person name="Sanders M."/>
            <person name="Whitehead S."/>
            <person name="Quail M.A."/>
            <person name="Dougan G."/>
            <person name="Parkhill J."/>
            <person name="Prentice M.B."/>
        </authorList>
    </citation>
    <scope>NUCLEOTIDE SEQUENCE [LARGE SCALE GENOMIC DNA]</scope>
    <source>
        <strain>NCTC 13174 / 8081</strain>
    </source>
</reference>
<dbReference type="EC" id="6.1.1.7" evidence="1"/>
<dbReference type="EMBL" id="AM286415">
    <property type="protein sequence ID" value="CAL10934.1"/>
    <property type="molecule type" value="Genomic_DNA"/>
</dbReference>
<dbReference type="RefSeq" id="WP_011815643.1">
    <property type="nucleotide sequence ID" value="NC_008800.1"/>
</dbReference>
<dbReference type="RefSeq" id="YP_001005172.1">
    <property type="nucleotide sequence ID" value="NC_008800.1"/>
</dbReference>
<dbReference type="SMR" id="A1JK09"/>
<dbReference type="KEGG" id="yen:YE0834"/>
<dbReference type="PATRIC" id="fig|393305.7.peg.928"/>
<dbReference type="eggNOG" id="COG0013">
    <property type="taxonomic scope" value="Bacteria"/>
</dbReference>
<dbReference type="HOGENOM" id="CLU_004485_1_1_6"/>
<dbReference type="OrthoDB" id="9803884at2"/>
<dbReference type="Proteomes" id="UP000000642">
    <property type="component" value="Chromosome"/>
</dbReference>
<dbReference type="GO" id="GO:0005829">
    <property type="term" value="C:cytosol"/>
    <property type="evidence" value="ECO:0007669"/>
    <property type="project" value="TreeGrafter"/>
</dbReference>
<dbReference type="GO" id="GO:0004813">
    <property type="term" value="F:alanine-tRNA ligase activity"/>
    <property type="evidence" value="ECO:0007669"/>
    <property type="project" value="UniProtKB-UniRule"/>
</dbReference>
<dbReference type="GO" id="GO:0002161">
    <property type="term" value="F:aminoacyl-tRNA deacylase activity"/>
    <property type="evidence" value="ECO:0007669"/>
    <property type="project" value="TreeGrafter"/>
</dbReference>
<dbReference type="GO" id="GO:0005524">
    <property type="term" value="F:ATP binding"/>
    <property type="evidence" value="ECO:0007669"/>
    <property type="project" value="UniProtKB-UniRule"/>
</dbReference>
<dbReference type="GO" id="GO:0000049">
    <property type="term" value="F:tRNA binding"/>
    <property type="evidence" value="ECO:0007669"/>
    <property type="project" value="UniProtKB-KW"/>
</dbReference>
<dbReference type="GO" id="GO:0008270">
    <property type="term" value="F:zinc ion binding"/>
    <property type="evidence" value="ECO:0007669"/>
    <property type="project" value="UniProtKB-UniRule"/>
</dbReference>
<dbReference type="GO" id="GO:0006419">
    <property type="term" value="P:alanyl-tRNA aminoacylation"/>
    <property type="evidence" value="ECO:0007669"/>
    <property type="project" value="UniProtKB-UniRule"/>
</dbReference>
<dbReference type="GO" id="GO:0045892">
    <property type="term" value="P:negative regulation of DNA-templated transcription"/>
    <property type="evidence" value="ECO:0007669"/>
    <property type="project" value="TreeGrafter"/>
</dbReference>
<dbReference type="CDD" id="cd00673">
    <property type="entry name" value="AlaRS_core"/>
    <property type="match status" value="1"/>
</dbReference>
<dbReference type="FunFam" id="2.40.30.130:FF:000001">
    <property type="entry name" value="Alanine--tRNA ligase"/>
    <property type="match status" value="1"/>
</dbReference>
<dbReference type="FunFam" id="3.10.310.40:FF:000001">
    <property type="entry name" value="Alanine--tRNA ligase"/>
    <property type="match status" value="1"/>
</dbReference>
<dbReference type="FunFam" id="3.30.54.20:FF:000001">
    <property type="entry name" value="Alanine--tRNA ligase"/>
    <property type="match status" value="1"/>
</dbReference>
<dbReference type="FunFam" id="3.30.930.10:FF:000004">
    <property type="entry name" value="Alanine--tRNA ligase"/>
    <property type="match status" value="1"/>
</dbReference>
<dbReference type="FunFam" id="3.30.980.10:FF:000004">
    <property type="entry name" value="Alanine--tRNA ligase, cytoplasmic"/>
    <property type="match status" value="1"/>
</dbReference>
<dbReference type="Gene3D" id="2.40.30.130">
    <property type="match status" value="1"/>
</dbReference>
<dbReference type="Gene3D" id="3.10.310.40">
    <property type="match status" value="1"/>
</dbReference>
<dbReference type="Gene3D" id="3.30.54.20">
    <property type="match status" value="1"/>
</dbReference>
<dbReference type="Gene3D" id="6.10.250.550">
    <property type="match status" value="1"/>
</dbReference>
<dbReference type="Gene3D" id="3.30.930.10">
    <property type="entry name" value="Bira Bifunctional Protein, Domain 2"/>
    <property type="match status" value="1"/>
</dbReference>
<dbReference type="Gene3D" id="3.30.980.10">
    <property type="entry name" value="Threonyl-trna Synthetase, Chain A, domain 2"/>
    <property type="match status" value="1"/>
</dbReference>
<dbReference type="HAMAP" id="MF_00036_B">
    <property type="entry name" value="Ala_tRNA_synth_B"/>
    <property type="match status" value="1"/>
</dbReference>
<dbReference type="InterPro" id="IPR045864">
    <property type="entry name" value="aa-tRNA-synth_II/BPL/LPL"/>
</dbReference>
<dbReference type="InterPro" id="IPR002318">
    <property type="entry name" value="Ala-tRNA-lgiase_IIc"/>
</dbReference>
<dbReference type="InterPro" id="IPR018162">
    <property type="entry name" value="Ala-tRNA-ligase_IIc_anticod-bd"/>
</dbReference>
<dbReference type="InterPro" id="IPR018165">
    <property type="entry name" value="Ala-tRNA-synth_IIc_core"/>
</dbReference>
<dbReference type="InterPro" id="IPR018164">
    <property type="entry name" value="Ala-tRNA-synth_IIc_N"/>
</dbReference>
<dbReference type="InterPro" id="IPR050058">
    <property type="entry name" value="Ala-tRNA_ligase"/>
</dbReference>
<dbReference type="InterPro" id="IPR023033">
    <property type="entry name" value="Ala_tRNA_ligase_euk/bac"/>
</dbReference>
<dbReference type="InterPro" id="IPR003156">
    <property type="entry name" value="DHHA1_dom"/>
</dbReference>
<dbReference type="InterPro" id="IPR018163">
    <property type="entry name" value="Thr/Ala-tRNA-synth_IIc_edit"/>
</dbReference>
<dbReference type="InterPro" id="IPR009000">
    <property type="entry name" value="Transl_B-barrel_sf"/>
</dbReference>
<dbReference type="InterPro" id="IPR012947">
    <property type="entry name" value="tRNA_SAD"/>
</dbReference>
<dbReference type="NCBIfam" id="TIGR00344">
    <property type="entry name" value="alaS"/>
    <property type="match status" value="1"/>
</dbReference>
<dbReference type="PANTHER" id="PTHR11777:SF9">
    <property type="entry name" value="ALANINE--TRNA LIGASE, CYTOPLASMIC"/>
    <property type="match status" value="1"/>
</dbReference>
<dbReference type="PANTHER" id="PTHR11777">
    <property type="entry name" value="ALANYL-TRNA SYNTHETASE"/>
    <property type="match status" value="1"/>
</dbReference>
<dbReference type="Pfam" id="PF02272">
    <property type="entry name" value="DHHA1"/>
    <property type="match status" value="1"/>
</dbReference>
<dbReference type="Pfam" id="PF01411">
    <property type="entry name" value="tRNA-synt_2c"/>
    <property type="match status" value="1"/>
</dbReference>
<dbReference type="Pfam" id="PF07973">
    <property type="entry name" value="tRNA_SAD"/>
    <property type="match status" value="1"/>
</dbReference>
<dbReference type="PRINTS" id="PR00980">
    <property type="entry name" value="TRNASYNTHALA"/>
</dbReference>
<dbReference type="SMART" id="SM00863">
    <property type="entry name" value="tRNA_SAD"/>
    <property type="match status" value="1"/>
</dbReference>
<dbReference type="SUPFAM" id="SSF55681">
    <property type="entry name" value="Class II aaRS and biotin synthetases"/>
    <property type="match status" value="1"/>
</dbReference>
<dbReference type="SUPFAM" id="SSF101353">
    <property type="entry name" value="Putative anticodon-binding domain of alanyl-tRNA synthetase (AlaRS)"/>
    <property type="match status" value="1"/>
</dbReference>
<dbReference type="SUPFAM" id="SSF55186">
    <property type="entry name" value="ThrRS/AlaRS common domain"/>
    <property type="match status" value="1"/>
</dbReference>
<dbReference type="SUPFAM" id="SSF50447">
    <property type="entry name" value="Translation proteins"/>
    <property type="match status" value="1"/>
</dbReference>
<dbReference type="PROSITE" id="PS50860">
    <property type="entry name" value="AA_TRNA_LIGASE_II_ALA"/>
    <property type="match status" value="1"/>
</dbReference>
<protein>
    <recommendedName>
        <fullName evidence="1">Alanine--tRNA ligase</fullName>
        <ecNumber evidence="1">6.1.1.7</ecNumber>
    </recommendedName>
    <alternativeName>
        <fullName evidence="1">Alanyl-tRNA synthetase</fullName>
        <shortName evidence="1">AlaRS</shortName>
    </alternativeName>
</protein>
<name>SYA_YERE8</name>